<evidence type="ECO:0000255" key="1">
    <source>
        <dbReference type="HAMAP-Rule" id="MF_00159"/>
    </source>
</evidence>
<keyword id="KW-0004">4Fe-4S</keyword>
<keyword id="KW-0408">Iron</keyword>
<keyword id="KW-0411">Iron-sulfur</keyword>
<keyword id="KW-0414">Isoprene biosynthesis</keyword>
<keyword id="KW-0479">Metal-binding</keyword>
<keyword id="KW-0560">Oxidoreductase</keyword>
<organism>
    <name type="scientific">Bacillus cereus (strain AH187)</name>
    <dbReference type="NCBI Taxonomy" id="405534"/>
    <lineage>
        <taxon>Bacteria</taxon>
        <taxon>Bacillati</taxon>
        <taxon>Bacillota</taxon>
        <taxon>Bacilli</taxon>
        <taxon>Bacillales</taxon>
        <taxon>Bacillaceae</taxon>
        <taxon>Bacillus</taxon>
        <taxon>Bacillus cereus group</taxon>
    </lineage>
</organism>
<reference key="1">
    <citation type="submission" date="2008-10" db="EMBL/GenBank/DDBJ databases">
        <title>Genome sequence of Bacillus cereus AH187.</title>
        <authorList>
            <person name="Dodson R.J."/>
            <person name="Durkin A.S."/>
            <person name="Rosovitz M.J."/>
            <person name="Rasko D.A."/>
            <person name="Kolsto A.B."/>
            <person name="Okstad O.A."/>
            <person name="Ravel J."/>
            <person name="Sutton G."/>
        </authorList>
    </citation>
    <scope>NUCLEOTIDE SEQUENCE [LARGE SCALE GENOMIC DNA]</scope>
    <source>
        <strain>AH187</strain>
    </source>
</reference>
<name>ISPG_BACC7</name>
<sequence>MNEMTHRTKTRPVKVGNLTIGGNNELIIQSMTTTKTHDVEATVAEIKRLEEAGCQVVRVAVPDERAANAIADIKKQINIPLVADIHFDYRLALKAIEGGIDKVRINPGNIGRRHKVEAVVNAAKERGIPIRIGVNAGSLERHILEKYGYPTADGMVESALHHIKILEDLDFHDIIVSMKASDVNLAIEAYEKAARAFDYPLHLGITESGTLFAGTVKSAAGLGAILSKGIGNTLRISLSADPVEEVKVARELLKSFGLASNAATLISCPTCGRIEIDLISIANEVEEYISTLQVPIKVAVLGCAVNGPGEAREADIGIAGARGEGLLFRKGQVVRKVPEEIMVEELKKEIDVIAAEMAAEREKEKETQEQ</sequence>
<comment type="function">
    <text evidence="1">Converts 2C-methyl-D-erythritol 2,4-cyclodiphosphate (ME-2,4cPP) into 1-hydroxy-2-methyl-2-(E)-butenyl 4-diphosphate.</text>
</comment>
<comment type="catalytic activity">
    <reaction evidence="1">
        <text>(2E)-4-hydroxy-3-methylbut-2-enyl diphosphate + oxidized [flavodoxin] + H2O + 2 H(+) = 2-C-methyl-D-erythritol 2,4-cyclic diphosphate + reduced [flavodoxin]</text>
        <dbReference type="Rhea" id="RHEA:43604"/>
        <dbReference type="Rhea" id="RHEA-COMP:10622"/>
        <dbReference type="Rhea" id="RHEA-COMP:10623"/>
        <dbReference type="ChEBI" id="CHEBI:15377"/>
        <dbReference type="ChEBI" id="CHEBI:15378"/>
        <dbReference type="ChEBI" id="CHEBI:57618"/>
        <dbReference type="ChEBI" id="CHEBI:58210"/>
        <dbReference type="ChEBI" id="CHEBI:58483"/>
        <dbReference type="ChEBI" id="CHEBI:128753"/>
        <dbReference type="EC" id="1.17.7.3"/>
    </reaction>
</comment>
<comment type="cofactor">
    <cofactor evidence="1">
        <name>[4Fe-4S] cluster</name>
        <dbReference type="ChEBI" id="CHEBI:49883"/>
    </cofactor>
    <text evidence="1">Binds 1 [4Fe-4S] cluster.</text>
</comment>
<comment type="pathway">
    <text evidence="1">Isoprenoid biosynthesis; isopentenyl diphosphate biosynthesis via DXP pathway; isopentenyl diphosphate from 1-deoxy-D-xylulose 5-phosphate: step 5/6.</text>
</comment>
<comment type="similarity">
    <text evidence="1">Belongs to the IspG family.</text>
</comment>
<accession>B7HPH8</accession>
<feature type="chain" id="PRO_1000118163" description="4-hydroxy-3-methylbut-2-en-1-yl diphosphate synthase (flavodoxin)">
    <location>
        <begin position="1"/>
        <end position="370"/>
    </location>
</feature>
<feature type="binding site" evidence="1">
    <location>
        <position position="268"/>
    </location>
    <ligand>
        <name>[4Fe-4S] cluster</name>
        <dbReference type="ChEBI" id="CHEBI:49883"/>
    </ligand>
</feature>
<feature type="binding site" evidence="1">
    <location>
        <position position="271"/>
    </location>
    <ligand>
        <name>[4Fe-4S] cluster</name>
        <dbReference type="ChEBI" id="CHEBI:49883"/>
    </ligand>
</feature>
<feature type="binding site" evidence="1">
    <location>
        <position position="303"/>
    </location>
    <ligand>
        <name>[4Fe-4S] cluster</name>
        <dbReference type="ChEBI" id="CHEBI:49883"/>
    </ligand>
</feature>
<feature type="binding site" evidence="1">
    <location>
        <position position="310"/>
    </location>
    <ligand>
        <name>[4Fe-4S] cluster</name>
        <dbReference type="ChEBI" id="CHEBI:49883"/>
    </ligand>
</feature>
<protein>
    <recommendedName>
        <fullName evidence="1">4-hydroxy-3-methylbut-2-en-1-yl diphosphate synthase (flavodoxin)</fullName>
        <ecNumber evidence="1">1.17.7.3</ecNumber>
    </recommendedName>
    <alternativeName>
        <fullName evidence="1">1-hydroxy-2-methyl-2-(E)-butenyl 4-diphosphate synthase</fullName>
    </alternativeName>
</protein>
<dbReference type="EC" id="1.17.7.3" evidence="1"/>
<dbReference type="EMBL" id="CP001177">
    <property type="protein sequence ID" value="ACJ80087.1"/>
    <property type="molecule type" value="Genomic_DNA"/>
</dbReference>
<dbReference type="SMR" id="B7HPH8"/>
<dbReference type="KEGG" id="bcr:BCAH187_A4412"/>
<dbReference type="HOGENOM" id="CLU_042258_0_0_9"/>
<dbReference type="UniPathway" id="UPA00056">
    <property type="reaction ID" value="UER00096"/>
</dbReference>
<dbReference type="Proteomes" id="UP000002214">
    <property type="component" value="Chromosome"/>
</dbReference>
<dbReference type="GO" id="GO:0051539">
    <property type="term" value="F:4 iron, 4 sulfur cluster binding"/>
    <property type="evidence" value="ECO:0007669"/>
    <property type="project" value="UniProtKB-UniRule"/>
</dbReference>
<dbReference type="GO" id="GO:0046429">
    <property type="term" value="F:4-hydroxy-3-methylbut-2-en-1-yl diphosphate synthase activity (ferredoxin)"/>
    <property type="evidence" value="ECO:0007669"/>
    <property type="project" value="UniProtKB-UniRule"/>
</dbReference>
<dbReference type="GO" id="GO:0141197">
    <property type="term" value="F:4-hydroxy-3-methylbut-2-enyl-diphosphate synthase activity (flavodoxin)"/>
    <property type="evidence" value="ECO:0007669"/>
    <property type="project" value="UniProtKB-EC"/>
</dbReference>
<dbReference type="GO" id="GO:0005506">
    <property type="term" value="F:iron ion binding"/>
    <property type="evidence" value="ECO:0007669"/>
    <property type="project" value="InterPro"/>
</dbReference>
<dbReference type="GO" id="GO:0019288">
    <property type="term" value="P:isopentenyl diphosphate biosynthetic process, methylerythritol 4-phosphate pathway"/>
    <property type="evidence" value="ECO:0007669"/>
    <property type="project" value="UniProtKB-UniRule"/>
</dbReference>
<dbReference type="GO" id="GO:0016114">
    <property type="term" value="P:terpenoid biosynthetic process"/>
    <property type="evidence" value="ECO:0007669"/>
    <property type="project" value="InterPro"/>
</dbReference>
<dbReference type="FunFam" id="3.20.20.20:FF:000001">
    <property type="entry name" value="4-hydroxy-3-methylbut-2-en-1-yl diphosphate synthase (flavodoxin)"/>
    <property type="match status" value="1"/>
</dbReference>
<dbReference type="FunFam" id="3.30.413.10:FF:000005">
    <property type="entry name" value="4-hydroxy-3-methylbut-2-en-1-yl diphosphate synthase (flavodoxin)"/>
    <property type="match status" value="1"/>
</dbReference>
<dbReference type="Gene3D" id="3.20.20.20">
    <property type="entry name" value="Dihydropteroate synthase-like"/>
    <property type="match status" value="1"/>
</dbReference>
<dbReference type="Gene3D" id="3.30.413.10">
    <property type="entry name" value="Sulfite Reductase Hemoprotein, domain 1"/>
    <property type="match status" value="1"/>
</dbReference>
<dbReference type="HAMAP" id="MF_00159">
    <property type="entry name" value="IspG"/>
    <property type="match status" value="1"/>
</dbReference>
<dbReference type="InterPro" id="IPR011005">
    <property type="entry name" value="Dihydropteroate_synth-like_sf"/>
</dbReference>
<dbReference type="InterPro" id="IPR016425">
    <property type="entry name" value="IspG_bac"/>
</dbReference>
<dbReference type="InterPro" id="IPR004588">
    <property type="entry name" value="IspG_bac-typ"/>
</dbReference>
<dbReference type="InterPro" id="IPR045854">
    <property type="entry name" value="NO2/SO3_Rdtase_4Fe4S_sf"/>
</dbReference>
<dbReference type="NCBIfam" id="TIGR00612">
    <property type="entry name" value="ispG_gcpE"/>
    <property type="match status" value="1"/>
</dbReference>
<dbReference type="NCBIfam" id="NF001540">
    <property type="entry name" value="PRK00366.1"/>
    <property type="match status" value="1"/>
</dbReference>
<dbReference type="PANTHER" id="PTHR30454">
    <property type="entry name" value="4-HYDROXY-3-METHYLBUT-2-EN-1-YL DIPHOSPHATE SYNTHASE"/>
    <property type="match status" value="1"/>
</dbReference>
<dbReference type="PANTHER" id="PTHR30454:SF0">
    <property type="entry name" value="4-HYDROXY-3-METHYLBUT-2-EN-1-YL DIPHOSPHATE SYNTHASE (FERREDOXIN), CHLOROPLASTIC"/>
    <property type="match status" value="1"/>
</dbReference>
<dbReference type="Pfam" id="PF04551">
    <property type="entry name" value="GcpE"/>
    <property type="match status" value="1"/>
</dbReference>
<dbReference type="PIRSF" id="PIRSF004640">
    <property type="entry name" value="IspG"/>
    <property type="match status" value="1"/>
</dbReference>
<dbReference type="SUPFAM" id="SSF51717">
    <property type="entry name" value="Dihydropteroate synthetase-like"/>
    <property type="match status" value="1"/>
</dbReference>
<dbReference type="SUPFAM" id="SSF56014">
    <property type="entry name" value="Nitrite and sulphite reductase 4Fe-4S domain-like"/>
    <property type="match status" value="1"/>
</dbReference>
<proteinExistence type="inferred from homology"/>
<gene>
    <name evidence="1" type="primary">ispG</name>
    <name type="ordered locus">BCAH187_A4412</name>
</gene>